<sequence>MSAVTVNDDGLVLRLYIQPKASRDSIVGLHGDEVKVAITAPPVDGQANSHLVKFLGKQFRVAKSQVVIEKGELGRHKQIKIINPQQIPPEIAALIN</sequence>
<name>YGGU_ECOLU</name>
<proteinExistence type="inferred from homology"/>
<accession>B7N7K6</accession>
<gene>
    <name evidence="1" type="primary">yggU</name>
    <name type="ordered locus">ECUMN_3305</name>
</gene>
<protein>
    <recommendedName>
        <fullName evidence="1">UPF0235 protein YggU</fullName>
    </recommendedName>
</protein>
<organism>
    <name type="scientific">Escherichia coli O17:K52:H18 (strain UMN026 / ExPEC)</name>
    <dbReference type="NCBI Taxonomy" id="585056"/>
    <lineage>
        <taxon>Bacteria</taxon>
        <taxon>Pseudomonadati</taxon>
        <taxon>Pseudomonadota</taxon>
        <taxon>Gammaproteobacteria</taxon>
        <taxon>Enterobacterales</taxon>
        <taxon>Enterobacteriaceae</taxon>
        <taxon>Escherichia</taxon>
    </lineage>
</organism>
<dbReference type="EMBL" id="CU928163">
    <property type="protein sequence ID" value="CAR14468.1"/>
    <property type="molecule type" value="Genomic_DNA"/>
</dbReference>
<dbReference type="RefSeq" id="WP_001277222.1">
    <property type="nucleotide sequence ID" value="NC_011751.1"/>
</dbReference>
<dbReference type="RefSeq" id="YP_002413987.1">
    <property type="nucleotide sequence ID" value="NC_011751.1"/>
</dbReference>
<dbReference type="SMR" id="B7N7K6"/>
<dbReference type="STRING" id="585056.ECUMN_3305"/>
<dbReference type="GeneID" id="86861043"/>
<dbReference type="KEGG" id="eum:ECUMN_3305"/>
<dbReference type="PATRIC" id="fig|585056.7.peg.3483"/>
<dbReference type="HOGENOM" id="CLU_130694_5_0_6"/>
<dbReference type="Proteomes" id="UP000007097">
    <property type="component" value="Chromosome"/>
</dbReference>
<dbReference type="GO" id="GO:0005737">
    <property type="term" value="C:cytoplasm"/>
    <property type="evidence" value="ECO:0007669"/>
    <property type="project" value="TreeGrafter"/>
</dbReference>
<dbReference type="Gene3D" id="3.30.1200.10">
    <property type="entry name" value="YggU-like"/>
    <property type="match status" value="1"/>
</dbReference>
<dbReference type="HAMAP" id="MF_00634">
    <property type="entry name" value="UPF0235"/>
    <property type="match status" value="1"/>
</dbReference>
<dbReference type="InterPro" id="IPR003746">
    <property type="entry name" value="DUF167"/>
</dbReference>
<dbReference type="InterPro" id="IPR036591">
    <property type="entry name" value="YggU-like_sf"/>
</dbReference>
<dbReference type="NCBIfam" id="TIGR00251">
    <property type="entry name" value="DUF167 family protein"/>
    <property type="match status" value="1"/>
</dbReference>
<dbReference type="NCBIfam" id="NF003466">
    <property type="entry name" value="PRK05090.1"/>
    <property type="match status" value="1"/>
</dbReference>
<dbReference type="PANTHER" id="PTHR13420">
    <property type="entry name" value="UPF0235 PROTEIN C15ORF40"/>
    <property type="match status" value="1"/>
</dbReference>
<dbReference type="PANTHER" id="PTHR13420:SF7">
    <property type="entry name" value="UPF0235 PROTEIN C15ORF40"/>
    <property type="match status" value="1"/>
</dbReference>
<dbReference type="Pfam" id="PF02594">
    <property type="entry name" value="DUF167"/>
    <property type="match status" value="1"/>
</dbReference>
<dbReference type="SMART" id="SM01152">
    <property type="entry name" value="DUF167"/>
    <property type="match status" value="1"/>
</dbReference>
<dbReference type="SUPFAM" id="SSF69786">
    <property type="entry name" value="YggU-like"/>
    <property type="match status" value="1"/>
</dbReference>
<comment type="similarity">
    <text evidence="1">Belongs to the UPF0235 family.</text>
</comment>
<evidence type="ECO:0000255" key="1">
    <source>
        <dbReference type="HAMAP-Rule" id="MF_00634"/>
    </source>
</evidence>
<reference key="1">
    <citation type="journal article" date="2009" name="PLoS Genet.">
        <title>Organised genome dynamics in the Escherichia coli species results in highly diverse adaptive paths.</title>
        <authorList>
            <person name="Touchon M."/>
            <person name="Hoede C."/>
            <person name="Tenaillon O."/>
            <person name="Barbe V."/>
            <person name="Baeriswyl S."/>
            <person name="Bidet P."/>
            <person name="Bingen E."/>
            <person name="Bonacorsi S."/>
            <person name="Bouchier C."/>
            <person name="Bouvet O."/>
            <person name="Calteau A."/>
            <person name="Chiapello H."/>
            <person name="Clermont O."/>
            <person name="Cruveiller S."/>
            <person name="Danchin A."/>
            <person name="Diard M."/>
            <person name="Dossat C."/>
            <person name="Karoui M.E."/>
            <person name="Frapy E."/>
            <person name="Garry L."/>
            <person name="Ghigo J.M."/>
            <person name="Gilles A.M."/>
            <person name="Johnson J."/>
            <person name="Le Bouguenec C."/>
            <person name="Lescat M."/>
            <person name="Mangenot S."/>
            <person name="Martinez-Jehanne V."/>
            <person name="Matic I."/>
            <person name="Nassif X."/>
            <person name="Oztas S."/>
            <person name="Petit M.A."/>
            <person name="Pichon C."/>
            <person name="Rouy Z."/>
            <person name="Ruf C.S."/>
            <person name="Schneider D."/>
            <person name="Tourret J."/>
            <person name="Vacherie B."/>
            <person name="Vallenet D."/>
            <person name="Medigue C."/>
            <person name="Rocha E.P.C."/>
            <person name="Denamur E."/>
        </authorList>
    </citation>
    <scope>NUCLEOTIDE SEQUENCE [LARGE SCALE GENOMIC DNA]</scope>
    <source>
        <strain>UMN026 / ExPEC</strain>
    </source>
</reference>
<feature type="chain" id="PRO_1000130683" description="UPF0235 protein YggU">
    <location>
        <begin position="1"/>
        <end position="96"/>
    </location>
</feature>